<gene>
    <name evidence="15" type="primary">RXYLT1</name>
    <name type="synonym">TMEM5</name>
</gene>
<accession>Q9Y2B1</accession>
<accession>A8K017</accession>
<accession>Q6PKD6</accession>
<protein>
    <recommendedName>
        <fullName evidence="12">Ribitol-5-phosphate xylosyltransferase 1</fullName>
        <ecNumber evidence="9 10">2.4.2.61</ecNumber>
    </recommendedName>
    <alternativeName>
        <fullName evidence="12">Transmembrane protein 5</fullName>
    </alternativeName>
    <alternativeName>
        <fullName evidence="11">UDP-D-xylose:ribitol-5-phosphate beta1,4-xylosyltransferase</fullName>
    </alternativeName>
</protein>
<sequence>MRLTRKRLCSFLIALYCLFSLYAAYHVFFGRRRQAPAGSPRGLRKGAAPARERRGREQSTLESEEWNPWEGDEKNEQQHRFKTSLQILDKSTKGKTDLSVQIWGKAAIGLYLWEHIFEGLLDPSDVTAQWREGKSIVGRTQYSFITGPAVIPGYFSVDVNNVVLILNGREKAKIFYATQWLLYAQNLVQIQKLQHLAVVLLGNEHCDNEWINPFLKRNGGFVELLFIIYDSPWINDVDVFQWPLGVATYRNFPVVEASWSMLHDERPYLCNFLGTIYENSSRQALMNILKKDGNDKLCWVSAREHWQPQETNESLKNYQDALLQSDLTLCPVGVNTECYRIYEACSYGSIPVVEDVMTAGNCGNTSVHHGAPLQLLKSMGAPFIFIKNWKELPAVLEKEKTIILQEKIERRKMLLQWYQHFKTELKMKFTNILESSFLMNNKS</sequence>
<evidence type="ECO:0000255" key="1"/>
<evidence type="ECO:0000256" key="2">
    <source>
        <dbReference type="SAM" id="MobiDB-lite"/>
    </source>
</evidence>
<evidence type="ECO:0000269" key="3">
    <source>
    </source>
</evidence>
<evidence type="ECO:0000269" key="4">
    <source>
    </source>
</evidence>
<evidence type="ECO:0000269" key="5">
    <source>
    </source>
</evidence>
<evidence type="ECO:0000269" key="6">
    <source>
    </source>
</evidence>
<evidence type="ECO:0000269" key="7">
    <source>
    </source>
</evidence>
<evidence type="ECO:0000269" key="8">
    <source>
    </source>
</evidence>
<evidence type="ECO:0000269" key="9">
    <source>
    </source>
</evidence>
<evidence type="ECO:0000269" key="10">
    <source>
    </source>
</evidence>
<evidence type="ECO:0000303" key="11">
    <source>
    </source>
</evidence>
<evidence type="ECO:0000305" key="12"/>
<evidence type="ECO:0000305" key="13">
    <source>
    </source>
</evidence>
<evidence type="ECO:0000305" key="14">
    <source>
    </source>
</evidence>
<evidence type="ECO:0000312" key="15">
    <source>
        <dbReference type="HGNC" id="HGNC:13530"/>
    </source>
</evidence>
<keyword id="KW-0912">Congenital muscular dystrophy</keyword>
<keyword id="KW-0225">Disease variant</keyword>
<keyword id="KW-1215">Dystroglycanopathy</keyword>
<keyword id="KW-0333">Golgi apparatus</keyword>
<keyword id="KW-0451">Lissencephaly</keyword>
<keyword id="KW-0472">Membrane</keyword>
<keyword id="KW-1267">Proteomics identification</keyword>
<keyword id="KW-1185">Reference proteome</keyword>
<keyword id="KW-0735">Signal-anchor</keyword>
<keyword id="KW-0808">Transferase</keyword>
<keyword id="KW-0812">Transmembrane</keyword>
<keyword id="KW-1133">Transmembrane helix</keyword>
<reference key="1">
    <citation type="journal article" date="1999" name="Gene">
        <title>Selection of cDNAs encoding putative type II membrane proteins on the cell surface from a human full-length cDNA bank.</title>
        <authorList>
            <person name="Yokoyama-Kobayashi M."/>
            <person name="Yamaguchi T."/>
            <person name="Sekine S."/>
            <person name="Kato S."/>
        </authorList>
    </citation>
    <scope>NUCLEOTIDE SEQUENCE [MRNA]</scope>
</reference>
<reference key="2">
    <citation type="journal article" date="2004" name="Nat. Genet.">
        <title>Complete sequencing and characterization of 21,243 full-length human cDNAs.</title>
        <authorList>
            <person name="Ota T."/>
            <person name="Suzuki Y."/>
            <person name="Nishikawa T."/>
            <person name="Otsuki T."/>
            <person name="Sugiyama T."/>
            <person name="Irie R."/>
            <person name="Wakamatsu A."/>
            <person name="Hayashi K."/>
            <person name="Sato H."/>
            <person name="Nagai K."/>
            <person name="Kimura K."/>
            <person name="Makita H."/>
            <person name="Sekine M."/>
            <person name="Obayashi M."/>
            <person name="Nishi T."/>
            <person name="Shibahara T."/>
            <person name="Tanaka T."/>
            <person name="Ishii S."/>
            <person name="Yamamoto J."/>
            <person name="Saito K."/>
            <person name="Kawai Y."/>
            <person name="Isono Y."/>
            <person name="Nakamura Y."/>
            <person name="Nagahari K."/>
            <person name="Murakami K."/>
            <person name="Yasuda T."/>
            <person name="Iwayanagi T."/>
            <person name="Wagatsuma M."/>
            <person name="Shiratori A."/>
            <person name="Sudo H."/>
            <person name="Hosoiri T."/>
            <person name="Kaku Y."/>
            <person name="Kodaira H."/>
            <person name="Kondo H."/>
            <person name="Sugawara M."/>
            <person name="Takahashi M."/>
            <person name="Kanda K."/>
            <person name="Yokoi T."/>
            <person name="Furuya T."/>
            <person name="Kikkawa E."/>
            <person name="Omura Y."/>
            <person name="Abe K."/>
            <person name="Kamihara K."/>
            <person name="Katsuta N."/>
            <person name="Sato K."/>
            <person name="Tanikawa M."/>
            <person name="Yamazaki M."/>
            <person name="Ninomiya K."/>
            <person name="Ishibashi T."/>
            <person name="Yamashita H."/>
            <person name="Murakawa K."/>
            <person name="Fujimori K."/>
            <person name="Tanai H."/>
            <person name="Kimata M."/>
            <person name="Watanabe M."/>
            <person name="Hiraoka S."/>
            <person name="Chiba Y."/>
            <person name="Ishida S."/>
            <person name="Ono Y."/>
            <person name="Takiguchi S."/>
            <person name="Watanabe S."/>
            <person name="Yosida M."/>
            <person name="Hotuta T."/>
            <person name="Kusano J."/>
            <person name="Kanehori K."/>
            <person name="Takahashi-Fujii A."/>
            <person name="Hara H."/>
            <person name="Tanase T.-O."/>
            <person name="Nomura Y."/>
            <person name="Togiya S."/>
            <person name="Komai F."/>
            <person name="Hara R."/>
            <person name="Takeuchi K."/>
            <person name="Arita M."/>
            <person name="Imose N."/>
            <person name="Musashino K."/>
            <person name="Yuuki H."/>
            <person name="Oshima A."/>
            <person name="Sasaki N."/>
            <person name="Aotsuka S."/>
            <person name="Yoshikawa Y."/>
            <person name="Matsunawa H."/>
            <person name="Ichihara T."/>
            <person name="Shiohata N."/>
            <person name="Sano S."/>
            <person name="Moriya S."/>
            <person name="Momiyama H."/>
            <person name="Satoh N."/>
            <person name="Takami S."/>
            <person name="Terashima Y."/>
            <person name="Suzuki O."/>
            <person name="Nakagawa S."/>
            <person name="Senoh A."/>
            <person name="Mizoguchi H."/>
            <person name="Goto Y."/>
            <person name="Shimizu F."/>
            <person name="Wakebe H."/>
            <person name="Hishigaki H."/>
            <person name="Watanabe T."/>
            <person name="Sugiyama A."/>
            <person name="Takemoto M."/>
            <person name="Kawakami B."/>
            <person name="Yamazaki M."/>
            <person name="Watanabe K."/>
            <person name="Kumagai A."/>
            <person name="Itakura S."/>
            <person name="Fukuzumi Y."/>
            <person name="Fujimori Y."/>
            <person name="Komiyama M."/>
            <person name="Tashiro H."/>
            <person name="Tanigami A."/>
            <person name="Fujiwara T."/>
            <person name="Ono T."/>
            <person name="Yamada K."/>
            <person name="Fujii Y."/>
            <person name="Ozaki K."/>
            <person name="Hirao M."/>
            <person name="Ohmori Y."/>
            <person name="Kawabata A."/>
            <person name="Hikiji T."/>
            <person name="Kobatake N."/>
            <person name="Inagaki H."/>
            <person name="Ikema Y."/>
            <person name="Okamoto S."/>
            <person name="Okitani R."/>
            <person name="Kawakami T."/>
            <person name="Noguchi S."/>
            <person name="Itoh T."/>
            <person name="Shigeta K."/>
            <person name="Senba T."/>
            <person name="Matsumura K."/>
            <person name="Nakajima Y."/>
            <person name="Mizuno T."/>
            <person name="Morinaga M."/>
            <person name="Sasaki M."/>
            <person name="Togashi T."/>
            <person name="Oyama M."/>
            <person name="Hata H."/>
            <person name="Watanabe M."/>
            <person name="Komatsu T."/>
            <person name="Mizushima-Sugano J."/>
            <person name="Satoh T."/>
            <person name="Shirai Y."/>
            <person name="Takahashi Y."/>
            <person name="Nakagawa K."/>
            <person name="Okumura K."/>
            <person name="Nagase T."/>
            <person name="Nomura N."/>
            <person name="Kikuchi H."/>
            <person name="Masuho Y."/>
            <person name="Yamashita R."/>
            <person name="Nakai K."/>
            <person name="Yada T."/>
            <person name="Nakamura Y."/>
            <person name="Ohara O."/>
            <person name="Isogai T."/>
            <person name="Sugano S."/>
        </authorList>
    </citation>
    <scope>NUCLEOTIDE SEQUENCE [LARGE SCALE MRNA]</scope>
    <source>
        <tissue>Adrenal gland</tissue>
    </source>
</reference>
<reference key="3">
    <citation type="submission" date="2005-07" db="EMBL/GenBank/DDBJ databases">
        <authorList>
            <person name="Mural R.J."/>
            <person name="Istrail S."/>
            <person name="Sutton G.G."/>
            <person name="Florea L."/>
            <person name="Halpern A.L."/>
            <person name="Mobarry C.M."/>
            <person name="Lippert R."/>
            <person name="Walenz B."/>
            <person name="Shatkay H."/>
            <person name="Dew I."/>
            <person name="Miller J.R."/>
            <person name="Flanigan M.J."/>
            <person name="Edwards N.J."/>
            <person name="Bolanos R."/>
            <person name="Fasulo D."/>
            <person name="Halldorsson B.V."/>
            <person name="Hannenhalli S."/>
            <person name="Turner R."/>
            <person name="Yooseph S."/>
            <person name="Lu F."/>
            <person name="Nusskern D.R."/>
            <person name="Shue B.C."/>
            <person name="Zheng X.H."/>
            <person name="Zhong F."/>
            <person name="Delcher A.L."/>
            <person name="Huson D.H."/>
            <person name="Kravitz S.A."/>
            <person name="Mouchard L."/>
            <person name="Reinert K."/>
            <person name="Remington K.A."/>
            <person name="Clark A.G."/>
            <person name="Waterman M.S."/>
            <person name="Eichler E.E."/>
            <person name="Adams M.D."/>
            <person name="Hunkapiller M.W."/>
            <person name="Myers E.W."/>
            <person name="Venter J.C."/>
        </authorList>
    </citation>
    <scope>NUCLEOTIDE SEQUENCE [LARGE SCALE GENOMIC DNA]</scope>
</reference>
<reference key="4">
    <citation type="journal article" date="2004" name="Genome Res.">
        <title>The status, quality, and expansion of the NIH full-length cDNA project: the Mammalian Gene Collection (MGC).</title>
        <authorList>
            <consortium name="The MGC Project Team"/>
        </authorList>
    </citation>
    <scope>NUCLEOTIDE SEQUENCE [LARGE SCALE MRNA]</scope>
    <source>
        <tissue>Ovary</tissue>
        <tissue>Skin</tissue>
    </source>
</reference>
<reference key="5">
    <citation type="journal article" date="2013" name="J. Proteome Res.">
        <title>Toward a comprehensive characterization of a human cancer cell phosphoproteome.</title>
        <authorList>
            <person name="Zhou H."/>
            <person name="Di Palma S."/>
            <person name="Preisinger C."/>
            <person name="Peng M."/>
            <person name="Polat A.N."/>
            <person name="Heck A.J."/>
            <person name="Mohammed S."/>
        </authorList>
    </citation>
    <scope>IDENTIFICATION BY MASS SPECTROMETRY [LARGE SCALE ANALYSIS]</scope>
    <source>
        <tissue>Cervix carcinoma</tissue>
    </source>
</reference>
<reference key="6">
    <citation type="journal article" date="2013" name="Science">
        <title>Deciphering the glycosylome of dystroglycanopathies using haploid screens for lassa virus entry.</title>
        <authorList>
            <person name="Jae L.T."/>
            <person name="Raaben M."/>
            <person name="Riemersma M."/>
            <person name="van Beusekom E."/>
            <person name="Blomen V.A."/>
            <person name="Velds A."/>
            <person name="Kerkhoven R.M."/>
            <person name="Carette J.E."/>
            <person name="Topaloglu H."/>
            <person name="Meinecke P."/>
            <person name="Wessels M.W."/>
            <person name="Lefeber D.J."/>
            <person name="Whelan S.P."/>
            <person name="van Bokhoven H."/>
            <person name="Brummelkamp T.R."/>
        </authorList>
    </citation>
    <scope>INVOLVEMENT IN MDDGA10</scope>
</reference>
<reference key="7">
    <citation type="journal article" date="2014" name="Elife">
        <title>The glucuronyltransferase B4GAT1 is required for initiation of LARGE-mediated alpha-dystroglycan functional glycosylation.</title>
        <authorList>
            <person name="Willer T."/>
            <person name="Inamori K.I."/>
            <person name="Venzke D."/>
            <person name="Harvey C."/>
            <person name="Morgensen G."/>
            <person name="Hara Y."/>
            <person name="Beltran Valero de Bernabe D."/>
            <person name="Yu L."/>
            <person name="Wright K.M."/>
            <person name="Campbell K.P."/>
        </authorList>
    </citation>
    <scope>FUNCTION</scope>
    <scope>SUBCELLULAR LOCATION</scope>
    <scope>PATHWAY</scope>
</reference>
<reference key="8">
    <citation type="journal article" date="2016" name="Elife">
        <title>The functional O-mannose glycan on alpha-dystroglycan contains a phospho-ribitol primed for matriglycan addition.</title>
        <authorList>
            <person name="Praissman J.L."/>
            <person name="Willer T."/>
            <person name="Sheikh M.O."/>
            <person name="Toi A."/>
            <person name="Chitayat D."/>
            <person name="Lin Y.Y."/>
            <person name="Lee H."/>
            <person name="Stalnaker S.H."/>
            <person name="Wang S."/>
            <person name="Prabhakar P.K."/>
            <person name="Nelson S.F."/>
            <person name="Stemple D.L."/>
            <person name="Moore S.A."/>
            <person name="Moremen K.W."/>
            <person name="Campbell K.P."/>
            <person name="Wells L."/>
        </authorList>
    </citation>
    <scope>FUNCTION</scope>
    <scope>PATHWAY</scope>
    <scope>VARIANT MDDGA10 ARG-333</scope>
    <scope>CHARACTERIZATION OF VARIANT MDDGA10 ARG-333</scope>
    <scope>CATALYTIC ACTIVITY</scope>
</reference>
<reference key="9">
    <citation type="journal article" date="2016" name="Neuromuscul. Disord.">
        <title>TMEM5-associated dystroglycanopathy presenting with CMD and mild limb-girdle muscle involvement.</title>
        <authorList>
            <person name="Astrea G."/>
            <person name="Pezzini I."/>
            <person name="Picillo E."/>
            <person name="Pasquariello R."/>
            <person name="Moro F."/>
            <person name="Ergoli M."/>
            <person name="D'Ambrosio P."/>
            <person name="D'Amico A."/>
            <person name="Politano L."/>
            <person name="Santorelli F.M."/>
        </authorList>
    </citation>
    <scope>INVOLVEMENT IN MDDGA10</scope>
</reference>
<reference key="10">
    <citation type="journal article" date="2016" name="J. Biol. Chem.">
        <title>The muscular dystrophy gene TMEM5 encodes a ribitol beta1,4-xylosyltran sferase required for the functional glycosylation of dystroglycan.</title>
        <authorList>
            <person name="Manya H."/>
            <person name="Yamaguchi Y."/>
            <person name="Kanagawa M."/>
            <person name="Kobayashi K."/>
            <person name="Tajiri M."/>
            <person name="Akasaka-Manya K."/>
            <person name="Kawakami H."/>
            <person name="Mizuno M."/>
            <person name="Wada Y."/>
            <person name="Toda T."/>
            <person name="Endo T."/>
        </authorList>
    </citation>
    <scope>FUNCTION</scope>
    <scope>CATALYTIC ACTIVITY</scope>
    <scope>PATHWAY</scope>
    <scope>CHARACTERIZATION OF VARIANTS MDDGA10 CYS-339 AND LEU-340</scope>
</reference>
<reference key="11">
    <citation type="journal article" date="2016" name="Mol. Cell. Proteomics">
        <title>Direct mapping of additional modifications on phosphorylated O-glycans of alpha-dystroglycan by mass spectrometry analysis in conjunction with knocking out of causative genes for dystroglycanopathy.</title>
        <authorList>
            <person name="Yagi H."/>
            <person name="Kuo C.W."/>
            <person name="Obayashi T."/>
            <person name="Ninagawa S."/>
            <person name="Khoo K.H."/>
            <person name="Kato K."/>
        </authorList>
    </citation>
    <scope>FUNCTION</scope>
    <scope>IDENTIFICATION IN A COMPLEX WITH FKTN AND FKRP</scope>
</reference>
<reference key="12">
    <citation type="journal article" date="2018" name="Biochem. Biophys. Res. Commun.">
        <title>Cell endogenous activities of fukutin and FKRP coexist with the ribitol xylosyltransferase, TMEM5.</title>
        <authorList>
            <person name="Nishihara R."/>
            <person name="Kobayashi K."/>
            <person name="Imae R."/>
            <person name="Tsumoto H."/>
            <person name="Manya H."/>
            <person name="Mizuno M."/>
            <person name="Kanagawa M."/>
            <person name="Endo T."/>
            <person name="Toda T."/>
        </authorList>
    </citation>
    <scope>FUNCTION</scope>
    <scope>CATALYTIC ACTIVITY</scope>
    <scope>PATHWAY</scope>
    <scope>IDENTIFICATION IN A COMPLEX WITH FKTN AND FKRP</scope>
    <scope>SUBCELLULAR LOCATION</scope>
</reference>
<reference key="13">
    <citation type="journal article" date="2012" name="Am. J. Hum. Genet.">
        <title>Identification of mutations in TMEM5 and ISPD as a cause of severe cobblestone lissencephaly.</title>
        <authorList>
            <person name="Vuillaumier-Barrot S."/>
            <person name="Bouchet-Seraphin C."/>
            <person name="Chelbi M."/>
            <person name="Devisme L."/>
            <person name="Quentin S."/>
            <person name="Gazal S."/>
            <person name="Laquerriere A."/>
            <person name="Fallet-Bianco C."/>
            <person name="Loget P."/>
            <person name="Odent S."/>
            <person name="Carles D."/>
            <person name="Bazin A."/>
            <person name="Aziza J."/>
            <person name="Clemenson A."/>
            <person name="Guimiot F."/>
            <person name="Bonniere M."/>
            <person name="Monnot S."/>
            <person name="Bole-Feysot C."/>
            <person name="Bernard J.P."/>
            <person name="Loeuillet L."/>
            <person name="Gonzales M."/>
            <person name="Socha K."/>
            <person name="Grandchamp B."/>
            <person name="Attie-Bitach T."/>
            <person name="Encha-Razavi F."/>
            <person name="Seta N."/>
        </authorList>
    </citation>
    <scope>VARIANTS MDDGA10 CYS-339 AND LEU-340</scope>
</reference>
<proteinExistence type="evidence at protein level"/>
<name>RXLT1_HUMAN</name>
<feature type="chain" id="PRO_0000072587" description="Ribitol-5-phosphate xylosyltransferase 1">
    <location>
        <begin position="1"/>
        <end position="443"/>
    </location>
</feature>
<feature type="topological domain" description="Cytoplasmic" evidence="1">
    <location>
        <begin position="1"/>
        <end position="9"/>
    </location>
</feature>
<feature type="transmembrane region" description="Helical; Signal-anchor for type II membrane protein" evidence="1">
    <location>
        <begin position="10"/>
        <end position="30"/>
    </location>
</feature>
<feature type="topological domain" description="Extracellular" evidence="1">
    <location>
        <begin position="31"/>
        <end position="443"/>
    </location>
</feature>
<feature type="region of interest" description="Disordered" evidence="2">
    <location>
        <begin position="35"/>
        <end position="76"/>
    </location>
</feature>
<feature type="compositionally biased region" description="Basic and acidic residues" evidence="2">
    <location>
        <begin position="50"/>
        <end position="59"/>
    </location>
</feature>
<feature type="sequence variant" id="VAR_085411" description="In MDDGA10; uncertain significance; loss of binding activity of alpha-dystroglycan (DAG1) for the ligand laminin in fibroblasts from patients; loss of alpha-dystroglycan functional glycosylation in fibroblasts from patients; does not affect Golgi apparatus localization; dbSNP:rs777596548." evidence="6">
    <original>G</original>
    <variation>R</variation>
    <location>
        <position position="333"/>
    </location>
</feature>
<feature type="sequence variant" id="VAR_069738" description="In MDDGA10; abolishes xylosyltransferase activity; dbSNP:rs150736997." evidence="3 9">
    <original>Y</original>
    <variation>C</variation>
    <location>
        <position position="339"/>
    </location>
</feature>
<feature type="sequence variant" id="VAR_069739" description="In MDDGA10; abolishes xylosyltransferase activity; dbSNP:rs768721082." evidence="3 9">
    <original>R</original>
    <variation>L</variation>
    <location>
        <position position="340"/>
    </location>
</feature>
<comment type="function">
    <text evidence="5 8 9 10 13">Acts as a UDP-D-xylose:ribitol-5-phosphate beta1,4-xylosyltransferase, which catalyzes the transfer of UDP-D-xylose to ribitol 5-phosphate (Rbo5P) to form the Xylbeta1-4Rbo5P linkage on O-mannosyl glycan (Probable) (PubMed:27733679, PubMed:29477842). Participates in the biosynthesis of the phosphorylated O-mannosyl trisaccharide (N-acetylgalactosamine-beta-3-N-acetylglucosamine-beta-4-(phosphate-6-)mannose), a carbohydrate structure present in alpha-dystroglycan (DAG1), which is required for binding laminin G-like domain-containing extracellular proteins with high affinity (Probable) (PubMed:25279699, PubMed:27601598, PubMed:27733679).</text>
</comment>
<comment type="catalytic activity">
    <reaction evidence="6 9 10">
        <text>3-O-[Rib-ol-P-Rib-ol-P-3-beta-D-GalNAc-(1-&gt;3)-beta-D-GlcNAc-(1-&gt;4)-(O-6-P-alpha-D-Man)]-Thr-[protein] + UDP-alpha-D-xylose = 3-O-[beta-D-Xyl-(1-&gt;4)-Rib-ol-P-Rib-ol-P-3-beta-D-GalNAc-(1-&gt;3)-beta-D-GlcNAc-(1-&gt;4)-(O-6-P-alpha-D-Man)]-Thr-[protein] + UDP + H(+)</text>
        <dbReference type="Rhea" id="RHEA:57880"/>
        <dbReference type="Rhea" id="RHEA-COMP:15021"/>
        <dbReference type="Rhea" id="RHEA-COMP:15023"/>
        <dbReference type="ChEBI" id="CHEBI:15378"/>
        <dbReference type="ChEBI" id="CHEBI:57632"/>
        <dbReference type="ChEBI" id="CHEBI:58223"/>
        <dbReference type="ChEBI" id="CHEBI:142403"/>
        <dbReference type="ChEBI" id="CHEBI:142405"/>
        <dbReference type="EC" id="2.4.2.61"/>
    </reaction>
    <physiologicalReaction direction="left-to-right" evidence="10 14">
        <dbReference type="Rhea" id="RHEA:57881"/>
    </physiologicalReaction>
</comment>
<comment type="pathway">
    <text evidence="5 6 9 10">Protein modification; protein glycosylation.</text>
</comment>
<comment type="subunit">
    <text evidence="8 10">Forms a complex composed of FKTN/fukutin, FKRP and RXYLT1/TMEM5.</text>
</comment>
<comment type="interaction">
    <interactant intactId="EBI-3914763">
        <id>Q9Y2B1</id>
    </interactant>
    <interactant intactId="EBI-21511782">
        <id>O75072</id>
        <label>FKTN</label>
    </interactant>
    <organismsDiffer>false</organismsDiffer>
    <experiments>5</experiments>
</comment>
<comment type="interaction">
    <interactant intactId="EBI-3914763">
        <id>Q9Y2B1</id>
    </interactant>
    <interactant intactId="EBI-3912424">
        <id>Q8WZA1</id>
        <label>POMGNT1</label>
    </interactant>
    <organismsDiffer>false</organismsDiffer>
    <experiments>5</experiments>
</comment>
<comment type="interaction">
    <interactant intactId="EBI-3914763">
        <id>Q9Y2B1</id>
    </interactant>
    <interactant intactId="EBI-720609">
        <id>O76024</id>
        <label>WFS1</label>
    </interactant>
    <organismsDiffer>false</organismsDiffer>
    <experiments>3</experiments>
</comment>
<comment type="subcellular location">
    <subcellularLocation>
        <location evidence="5 10">Golgi apparatus membrane</location>
        <topology evidence="12">Single-pass type II membrane protein</topology>
    </subcellularLocation>
</comment>
<comment type="disease" evidence="3 4 6 7 9">
    <disease id="DI-03684">
        <name>Muscular dystrophy-dystroglycanopathy congenital with brain and eye anomalies A10</name>
        <acronym>MDDGA10</acronym>
        <description>An autosomal recessive disorder characterized by congenital muscular dystrophy associated with cobblestone lissencephaly and other brain anomalies, eye malformations, profound intellectual disability, and death usually in the first years of life. Included diseases are the more severe Walker-Warburg syndrome and the slightly less severe muscle-eye-brain disease.</description>
        <dbReference type="MIM" id="615041"/>
    </disease>
    <text>The disease is caused by variants affecting the gene represented in this entry.</text>
</comment>
<comment type="similarity">
    <text evidence="12">Belongs to the RXYLT1 family.</text>
</comment>
<comment type="sequence caution" evidence="12">
    <conflict type="miscellaneous discrepancy">
        <sequence resource="EMBL-CDS" id="AAH02596"/>
    </conflict>
    <text>Contaminating sequence. Potential poly-A sequence.</text>
</comment>
<organism>
    <name type="scientific">Homo sapiens</name>
    <name type="common">Human</name>
    <dbReference type="NCBI Taxonomy" id="9606"/>
    <lineage>
        <taxon>Eukaryota</taxon>
        <taxon>Metazoa</taxon>
        <taxon>Chordata</taxon>
        <taxon>Craniata</taxon>
        <taxon>Vertebrata</taxon>
        <taxon>Euteleostomi</taxon>
        <taxon>Mammalia</taxon>
        <taxon>Eutheria</taxon>
        <taxon>Euarchontoglires</taxon>
        <taxon>Primates</taxon>
        <taxon>Haplorrhini</taxon>
        <taxon>Catarrhini</taxon>
        <taxon>Hominidae</taxon>
        <taxon>Homo</taxon>
    </lineage>
</organism>
<dbReference type="EC" id="2.4.2.61" evidence="9 10"/>
<dbReference type="EMBL" id="AB015633">
    <property type="protein sequence ID" value="BAA76500.1"/>
    <property type="molecule type" value="mRNA"/>
</dbReference>
<dbReference type="EMBL" id="AK289382">
    <property type="protein sequence ID" value="BAF82071.1"/>
    <property type="molecule type" value="mRNA"/>
</dbReference>
<dbReference type="EMBL" id="CH471054">
    <property type="protein sequence ID" value="EAW97121.1"/>
    <property type="molecule type" value="Genomic_DNA"/>
</dbReference>
<dbReference type="EMBL" id="BC002596">
    <property type="protein sequence ID" value="AAH02596.1"/>
    <property type="status" value="ALT_SEQ"/>
    <property type="molecule type" value="mRNA"/>
</dbReference>
<dbReference type="EMBL" id="BC013152">
    <property type="protein sequence ID" value="AAH13152.1"/>
    <property type="molecule type" value="mRNA"/>
</dbReference>
<dbReference type="CCDS" id="CCDS8966.1"/>
<dbReference type="RefSeq" id="NP_001265166.1">
    <property type="nucleotide sequence ID" value="NM_001278237.1"/>
</dbReference>
<dbReference type="RefSeq" id="NP_055069.1">
    <property type="nucleotide sequence ID" value="NM_014254.3"/>
</dbReference>
<dbReference type="BioGRID" id="115612">
    <property type="interactions" value="21"/>
</dbReference>
<dbReference type="ComplexPortal" id="CPX-7722">
    <property type="entry name" value="Fukutin-FKRP-TMEM5 multienzyme complex"/>
</dbReference>
<dbReference type="FunCoup" id="Q9Y2B1">
    <property type="interactions" value="1063"/>
</dbReference>
<dbReference type="IntAct" id="Q9Y2B1">
    <property type="interactions" value="18"/>
</dbReference>
<dbReference type="STRING" id="9606.ENSP00000261234"/>
<dbReference type="GlyGen" id="Q9Y2B1">
    <property type="glycosylation" value="4 sites, 1 N-linked glycan (1 site), 1 O-linked glycan (3 sites)"/>
</dbReference>
<dbReference type="iPTMnet" id="Q9Y2B1"/>
<dbReference type="PhosphoSitePlus" id="Q9Y2B1"/>
<dbReference type="BioMuta" id="TMEM5"/>
<dbReference type="jPOST" id="Q9Y2B1"/>
<dbReference type="MassIVE" id="Q9Y2B1"/>
<dbReference type="PaxDb" id="9606-ENSP00000261234"/>
<dbReference type="PeptideAtlas" id="Q9Y2B1"/>
<dbReference type="ProteomicsDB" id="85717"/>
<dbReference type="Antibodypedia" id="29125">
    <property type="antibodies" value="148 antibodies from 23 providers"/>
</dbReference>
<dbReference type="DNASU" id="10329"/>
<dbReference type="Ensembl" id="ENST00000261234.11">
    <property type="protein sequence ID" value="ENSP00000261234.6"/>
    <property type="gene ID" value="ENSG00000118600.13"/>
</dbReference>
<dbReference type="GeneID" id="10329"/>
<dbReference type="KEGG" id="hsa:10329"/>
<dbReference type="MANE-Select" id="ENST00000261234.11">
    <property type="protein sequence ID" value="ENSP00000261234.6"/>
    <property type="RefSeq nucleotide sequence ID" value="NM_014254.3"/>
    <property type="RefSeq protein sequence ID" value="NP_055069.1"/>
</dbReference>
<dbReference type="UCSC" id="uc001srq.3">
    <property type="organism name" value="human"/>
</dbReference>
<dbReference type="AGR" id="HGNC:13530"/>
<dbReference type="CTD" id="10329"/>
<dbReference type="DisGeNET" id="10329"/>
<dbReference type="GeneCards" id="RXYLT1"/>
<dbReference type="HGNC" id="HGNC:13530">
    <property type="gene designation" value="RXYLT1"/>
</dbReference>
<dbReference type="HPA" id="ENSG00000118600">
    <property type="expression patterns" value="Low tissue specificity"/>
</dbReference>
<dbReference type="MalaCards" id="RXYLT1"/>
<dbReference type="MIM" id="605862">
    <property type="type" value="gene"/>
</dbReference>
<dbReference type="MIM" id="615041">
    <property type="type" value="phenotype"/>
</dbReference>
<dbReference type="neXtProt" id="NX_Q9Y2B1"/>
<dbReference type="OpenTargets" id="ENSG00000118600"/>
<dbReference type="Orphanet" id="899">
    <property type="disease" value="Walker-Warburg syndrome"/>
</dbReference>
<dbReference type="PharmGKB" id="PA37796"/>
<dbReference type="VEuPathDB" id="HostDB:ENSG00000118600"/>
<dbReference type="eggNOG" id="ENOG502QT2E">
    <property type="taxonomic scope" value="Eukaryota"/>
</dbReference>
<dbReference type="GeneTree" id="ENSGT00390000003526"/>
<dbReference type="HOGENOM" id="CLU_040812_0_0_1"/>
<dbReference type="InParanoid" id="Q9Y2B1"/>
<dbReference type="OMA" id="IVGRTHY"/>
<dbReference type="OrthoDB" id="8560686at2759"/>
<dbReference type="PAN-GO" id="Q9Y2B1">
    <property type="GO annotations" value="3 GO annotations based on evolutionary models"/>
</dbReference>
<dbReference type="PhylomeDB" id="Q9Y2B1"/>
<dbReference type="TreeFam" id="TF328717"/>
<dbReference type="BioCyc" id="MetaCyc:ENSG00000118600-MONOMER"/>
<dbReference type="BRENDA" id="2.4.2.61">
    <property type="organism ID" value="2681"/>
</dbReference>
<dbReference type="PathwayCommons" id="Q9Y2B1"/>
<dbReference type="SignaLink" id="Q9Y2B1"/>
<dbReference type="UniPathway" id="UPA00378"/>
<dbReference type="BioGRID-ORCS" id="10329">
    <property type="hits" value="7 hits in 1149 CRISPR screens"/>
</dbReference>
<dbReference type="ChiTaRS" id="TMEM5">
    <property type="organism name" value="human"/>
</dbReference>
<dbReference type="GenomeRNAi" id="10329"/>
<dbReference type="Pharos" id="Q9Y2B1">
    <property type="development level" value="Tbio"/>
</dbReference>
<dbReference type="PRO" id="PR:Q9Y2B1"/>
<dbReference type="Proteomes" id="UP000005640">
    <property type="component" value="Chromosome 12"/>
</dbReference>
<dbReference type="RNAct" id="Q9Y2B1">
    <property type="molecule type" value="protein"/>
</dbReference>
<dbReference type="Bgee" id="ENSG00000118600">
    <property type="expression patterns" value="Expressed in corpus epididymis and 217 other cell types or tissues"/>
</dbReference>
<dbReference type="ExpressionAtlas" id="Q9Y2B1">
    <property type="expression patterns" value="baseline and differential"/>
</dbReference>
<dbReference type="GO" id="GO:0005794">
    <property type="term" value="C:Golgi apparatus"/>
    <property type="evidence" value="ECO:0000314"/>
    <property type="project" value="UniProtKB"/>
</dbReference>
<dbReference type="GO" id="GO:0000139">
    <property type="term" value="C:Golgi membrane"/>
    <property type="evidence" value="ECO:0007669"/>
    <property type="project" value="UniProtKB-SubCell"/>
</dbReference>
<dbReference type="GO" id="GO:0005654">
    <property type="term" value="C:nucleoplasm"/>
    <property type="evidence" value="ECO:0000314"/>
    <property type="project" value="HPA"/>
</dbReference>
<dbReference type="GO" id="GO:0005886">
    <property type="term" value="C:plasma membrane"/>
    <property type="evidence" value="ECO:0000304"/>
    <property type="project" value="ProtInc"/>
</dbReference>
<dbReference type="GO" id="GO:0120053">
    <property type="term" value="F:ribitol beta-1,4-xylosyltransferase activity"/>
    <property type="evidence" value="ECO:0000314"/>
    <property type="project" value="UniProtKB"/>
</dbReference>
<dbReference type="GO" id="GO:0035269">
    <property type="term" value="P:protein O-linked mannosylation"/>
    <property type="evidence" value="ECO:0000314"/>
    <property type="project" value="UniProtKB"/>
</dbReference>
<dbReference type="CDD" id="cd21099">
    <property type="entry name" value="RXYLT1-like"/>
    <property type="match status" value="1"/>
</dbReference>
<dbReference type="InterPro" id="IPR055286">
    <property type="entry name" value="RXYLT1-like"/>
</dbReference>
<dbReference type="PANTHER" id="PTHR15576">
    <property type="entry name" value="RIBITOL-5-PHOSPHATE XYLOSYLTRANSFERASE 1"/>
    <property type="match status" value="1"/>
</dbReference>
<dbReference type="PANTHER" id="PTHR15576:SF1">
    <property type="entry name" value="RIBITOL-5-PHOSPHATE XYLOSYLTRANSFERASE 1"/>
    <property type="match status" value="1"/>
</dbReference>
<dbReference type="Pfam" id="PF24785">
    <property type="entry name" value="RXYLT1_C"/>
    <property type="match status" value="1"/>
</dbReference>
<dbReference type="Pfam" id="PF24786">
    <property type="entry name" value="RXYLT1_N"/>
    <property type="match status" value="1"/>
</dbReference>